<reference key="1">
    <citation type="submission" date="2006-05" db="EMBL/GenBank/DDBJ databases">
        <title>Complete sequence of chromosome 1 of Burkholderia cenocepacia AU 1054.</title>
        <authorList>
            <consortium name="US DOE Joint Genome Institute"/>
            <person name="Copeland A."/>
            <person name="Lucas S."/>
            <person name="Lapidus A."/>
            <person name="Barry K."/>
            <person name="Detter J.C."/>
            <person name="Glavina del Rio T."/>
            <person name="Hammon N."/>
            <person name="Israni S."/>
            <person name="Dalin E."/>
            <person name="Tice H."/>
            <person name="Pitluck S."/>
            <person name="Chain P."/>
            <person name="Malfatti S."/>
            <person name="Shin M."/>
            <person name="Vergez L."/>
            <person name="Schmutz J."/>
            <person name="Larimer F."/>
            <person name="Land M."/>
            <person name="Hauser L."/>
            <person name="Kyrpides N."/>
            <person name="Lykidis A."/>
            <person name="LiPuma J.J."/>
            <person name="Konstantinidis K."/>
            <person name="Tiedje J.M."/>
            <person name="Richardson P."/>
        </authorList>
    </citation>
    <scope>NUCLEOTIDE SEQUENCE [LARGE SCALE GENOMIC DNA]</scope>
    <source>
        <strain>AU 1054</strain>
    </source>
</reference>
<evidence type="ECO:0000255" key="1">
    <source>
        <dbReference type="HAMAP-Rule" id="MF_01628"/>
    </source>
</evidence>
<proteinExistence type="inferred from homology"/>
<protein>
    <recommendedName>
        <fullName evidence="1">Thymidine phosphorylase</fullName>
        <ecNumber evidence="1">2.4.2.4</ecNumber>
    </recommendedName>
    <alternativeName>
        <fullName evidence="1">TdRPase</fullName>
    </alternativeName>
</protein>
<feature type="chain" id="PRO_0000335770" description="Thymidine phosphorylase">
    <location>
        <begin position="1"/>
        <end position="438"/>
    </location>
</feature>
<name>TYPH_BURO1</name>
<accession>Q1BV59</accession>
<keyword id="KW-0328">Glycosyltransferase</keyword>
<keyword id="KW-0808">Transferase</keyword>
<comment type="function">
    <text evidence="1">The enzymes which catalyze the reversible phosphorolysis of pyrimidine nucleosides are involved in the degradation of these compounds and in their utilization as carbon and energy sources, or in the rescue of pyrimidine bases for nucleotide synthesis.</text>
</comment>
<comment type="catalytic activity">
    <reaction evidence="1">
        <text>thymidine + phosphate = 2-deoxy-alpha-D-ribose 1-phosphate + thymine</text>
        <dbReference type="Rhea" id="RHEA:16037"/>
        <dbReference type="ChEBI" id="CHEBI:17748"/>
        <dbReference type="ChEBI" id="CHEBI:17821"/>
        <dbReference type="ChEBI" id="CHEBI:43474"/>
        <dbReference type="ChEBI" id="CHEBI:57259"/>
        <dbReference type="EC" id="2.4.2.4"/>
    </reaction>
</comment>
<comment type="pathway">
    <text evidence="1">Pyrimidine metabolism; dTMP biosynthesis via salvage pathway; dTMP from thymine: step 1/2.</text>
</comment>
<comment type="subunit">
    <text evidence="1">Homodimer.</text>
</comment>
<comment type="similarity">
    <text evidence="1">Belongs to the thymidine/pyrimidine-nucleoside phosphorylase family.</text>
</comment>
<dbReference type="EC" id="2.4.2.4" evidence="1"/>
<dbReference type="EMBL" id="CP000378">
    <property type="protein sequence ID" value="ABF76496.1"/>
    <property type="molecule type" value="Genomic_DNA"/>
</dbReference>
<dbReference type="SMR" id="Q1BV59"/>
<dbReference type="HOGENOM" id="CLU_025040_0_1_4"/>
<dbReference type="UniPathway" id="UPA00578">
    <property type="reaction ID" value="UER00638"/>
</dbReference>
<dbReference type="GO" id="GO:0005829">
    <property type="term" value="C:cytosol"/>
    <property type="evidence" value="ECO:0007669"/>
    <property type="project" value="TreeGrafter"/>
</dbReference>
<dbReference type="GO" id="GO:0004645">
    <property type="term" value="F:1,4-alpha-oligoglucan phosphorylase activity"/>
    <property type="evidence" value="ECO:0007669"/>
    <property type="project" value="InterPro"/>
</dbReference>
<dbReference type="GO" id="GO:0009032">
    <property type="term" value="F:thymidine phosphorylase activity"/>
    <property type="evidence" value="ECO:0007669"/>
    <property type="project" value="UniProtKB-UniRule"/>
</dbReference>
<dbReference type="GO" id="GO:0006206">
    <property type="term" value="P:pyrimidine nucleobase metabolic process"/>
    <property type="evidence" value="ECO:0007669"/>
    <property type="project" value="InterPro"/>
</dbReference>
<dbReference type="GO" id="GO:0046104">
    <property type="term" value="P:thymidine metabolic process"/>
    <property type="evidence" value="ECO:0007669"/>
    <property type="project" value="UniProtKB-UniRule"/>
</dbReference>
<dbReference type="FunFam" id="3.40.1030.10:FF:000001">
    <property type="entry name" value="Thymidine phosphorylase"/>
    <property type="match status" value="1"/>
</dbReference>
<dbReference type="Gene3D" id="3.40.1030.10">
    <property type="entry name" value="Nucleoside phosphorylase/phosphoribosyltransferase catalytic domain"/>
    <property type="match status" value="1"/>
</dbReference>
<dbReference type="Gene3D" id="3.90.1170.30">
    <property type="entry name" value="Pyrimidine nucleoside phosphorylase-like, C-terminal domain"/>
    <property type="match status" value="1"/>
</dbReference>
<dbReference type="Gene3D" id="1.20.970.10">
    <property type="entry name" value="Transferase, Pyrimidine Nucleoside Phosphorylase, Chain C"/>
    <property type="match status" value="1"/>
</dbReference>
<dbReference type="HAMAP" id="MF_01628">
    <property type="entry name" value="Thymid_phosp"/>
    <property type="match status" value="1"/>
</dbReference>
<dbReference type="InterPro" id="IPR000312">
    <property type="entry name" value="Glycosyl_Trfase_fam3"/>
</dbReference>
<dbReference type="InterPro" id="IPR017459">
    <property type="entry name" value="Glycosyl_Trfase_fam3_N_dom"/>
</dbReference>
<dbReference type="InterPro" id="IPR036320">
    <property type="entry name" value="Glycosyl_Trfase_fam3_N_dom_sf"/>
</dbReference>
<dbReference type="InterPro" id="IPR035902">
    <property type="entry name" value="Nuc_phospho_transferase"/>
</dbReference>
<dbReference type="InterPro" id="IPR036566">
    <property type="entry name" value="PYNP-like_C_sf"/>
</dbReference>
<dbReference type="InterPro" id="IPR013102">
    <property type="entry name" value="PYNP_C"/>
</dbReference>
<dbReference type="InterPro" id="IPR018090">
    <property type="entry name" value="Pyrmidine_PPas_bac/euk"/>
</dbReference>
<dbReference type="InterPro" id="IPR017872">
    <property type="entry name" value="Pyrmidine_PPase_CS"/>
</dbReference>
<dbReference type="InterPro" id="IPR000053">
    <property type="entry name" value="Thymidine/pyrmidine_PPase"/>
</dbReference>
<dbReference type="InterPro" id="IPR013465">
    <property type="entry name" value="Thymidine_Pase"/>
</dbReference>
<dbReference type="NCBIfam" id="NF004490">
    <property type="entry name" value="PRK05820.1"/>
    <property type="match status" value="1"/>
</dbReference>
<dbReference type="NCBIfam" id="TIGR02643">
    <property type="entry name" value="T_phosphoryl"/>
    <property type="match status" value="1"/>
</dbReference>
<dbReference type="NCBIfam" id="TIGR02644">
    <property type="entry name" value="Y_phosphoryl"/>
    <property type="match status" value="1"/>
</dbReference>
<dbReference type="PANTHER" id="PTHR10515">
    <property type="entry name" value="THYMIDINE PHOSPHORYLASE"/>
    <property type="match status" value="1"/>
</dbReference>
<dbReference type="PANTHER" id="PTHR10515:SF0">
    <property type="entry name" value="THYMIDINE PHOSPHORYLASE"/>
    <property type="match status" value="1"/>
</dbReference>
<dbReference type="Pfam" id="PF02885">
    <property type="entry name" value="Glycos_trans_3N"/>
    <property type="match status" value="1"/>
</dbReference>
<dbReference type="Pfam" id="PF00591">
    <property type="entry name" value="Glycos_transf_3"/>
    <property type="match status" value="1"/>
</dbReference>
<dbReference type="Pfam" id="PF07831">
    <property type="entry name" value="PYNP_C"/>
    <property type="match status" value="1"/>
</dbReference>
<dbReference type="PIRSF" id="PIRSF000478">
    <property type="entry name" value="TP_PyNP"/>
    <property type="match status" value="1"/>
</dbReference>
<dbReference type="SMART" id="SM00941">
    <property type="entry name" value="PYNP_C"/>
    <property type="match status" value="1"/>
</dbReference>
<dbReference type="SUPFAM" id="SSF52418">
    <property type="entry name" value="Nucleoside phosphorylase/phosphoribosyltransferase catalytic domain"/>
    <property type="match status" value="1"/>
</dbReference>
<dbReference type="SUPFAM" id="SSF47648">
    <property type="entry name" value="Nucleoside phosphorylase/phosphoribosyltransferase N-terminal domain"/>
    <property type="match status" value="1"/>
</dbReference>
<dbReference type="SUPFAM" id="SSF54680">
    <property type="entry name" value="Pyrimidine nucleoside phosphorylase C-terminal domain"/>
    <property type="match status" value="1"/>
</dbReference>
<dbReference type="PROSITE" id="PS00647">
    <property type="entry name" value="THYMID_PHOSPHORYLASE"/>
    <property type="match status" value="1"/>
</dbReference>
<sequence length="438" mass="45454">MFLPQEFIRRKRDGQPLDRDDMAAFVRGVTDGSVTEGQVAAFAMAVYFNDLSTDERVALTLAQRDSGDVLDWRALDLGGPVIDKHSTGGVGDVVSLMLGPMVAACGGYVPMISGRGLGHTGGTLDKLSAIPGYDVMPDTDAFRRTVREVGVAIIGQTARLAPADKRIYAIRDVTATVESVAMITASILSKKLAAGLDGLVMDVKVGSGAFMPTAEKSAELARSIVDVGNGAGMKTTAILTDMNQSLAPCAGNALEVACAIDYLTGKSRPARLHDVTMALSAELLVTGGLARDAAHAREKLQQALDSGAAAERFARMVAALGGPADLLDAPARHLARAAVIVPVPAPVSGVVQRVDCRALGLAVVALGGGRTRAEDAIDVSVGLSALAEIGQRIEAGEPLGFVHARDEAAAAHAVDAIRRGYVLGETGEAPPTLYQRVD</sequence>
<organism>
    <name type="scientific">Burkholderia orbicola (strain AU 1054)</name>
    <dbReference type="NCBI Taxonomy" id="331271"/>
    <lineage>
        <taxon>Bacteria</taxon>
        <taxon>Pseudomonadati</taxon>
        <taxon>Pseudomonadota</taxon>
        <taxon>Betaproteobacteria</taxon>
        <taxon>Burkholderiales</taxon>
        <taxon>Burkholderiaceae</taxon>
        <taxon>Burkholderia</taxon>
        <taxon>Burkholderia cepacia complex</taxon>
        <taxon>Burkholderia orbicola</taxon>
    </lineage>
</organism>
<gene>
    <name evidence="1" type="primary">deoA</name>
    <name type="ordered locus">Bcen_1591</name>
</gene>